<proteinExistence type="evidence at protein level"/>
<dbReference type="EMBL" id="AF123652">
    <property type="protein sequence ID" value="AAD23833.1"/>
    <property type="molecule type" value="mRNA"/>
</dbReference>
<dbReference type="EMBL" id="AF123653">
    <property type="protein sequence ID" value="AAD23834.1"/>
    <property type="molecule type" value="Genomic_DNA"/>
</dbReference>
<dbReference type="EMBL" id="AF123654">
    <property type="protein sequence ID" value="AAD23835.1"/>
    <property type="molecule type" value="mRNA"/>
</dbReference>
<dbReference type="EMBL" id="AF123655">
    <property type="protein sequence ID" value="AAD23836.1"/>
    <property type="molecule type" value="mRNA"/>
</dbReference>
<dbReference type="EMBL" id="AF123656">
    <property type="protein sequence ID" value="AAD23837.1"/>
    <property type="molecule type" value="mRNA"/>
</dbReference>
<dbReference type="EMBL" id="AF123657">
    <property type="protein sequence ID" value="AAD23838.1"/>
    <property type="molecule type" value="mRNA"/>
</dbReference>
<dbReference type="EMBL" id="AF123658">
    <property type="protein sequence ID" value="AAD23839.1"/>
    <property type="molecule type" value="mRNA"/>
</dbReference>
<dbReference type="EMBL" id="AF123659">
    <property type="protein sequence ID" value="AAD23840.1"/>
    <property type="molecule type" value="mRNA"/>
</dbReference>
<dbReference type="EMBL" id="CH471080">
    <property type="protein sequence ID" value="EAW63753.1"/>
    <property type="molecule type" value="Genomic_DNA"/>
</dbReference>
<dbReference type="EMBL" id="CH471080">
    <property type="protein sequence ID" value="EAW63755.1"/>
    <property type="molecule type" value="Genomic_DNA"/>
</dbReference>
<dbReference type="EMBL" id="BC075006">
    <property type="protein sequence ID" value="AAH75006.1"/>
    <property type="molecule type" value="mRNA"/>
</dbReference>
<dbReference type="EMBL" id="BC075007">
    <property type="protein sequence ID" value="AAH75007.1"/>
    <property type="molecule type" value="mRNA"/>
</dbReference>
<dbReference type="CCDS" id="CCDS6015.1">
    <molecule id="Q9Y250-1"/>
</dbReference>
<dbReference type="RefSeq" id="NP_001349813.1">
    <molecule id="Q9Y250-1"/>
    <property type="nucleotide sequence ID" value="NM_001362884.2"/>
</dbReference>
<dbReference type="RefSeq" id="NP_066300.1">
    <molecule id="Q9Y250-1"/>
    <property type="nucleotide sequence ID" value="NM_021020.5"/>
</dbReference>
<dbReference type="RefSeq" id="XP_005273451.1">
    <property type="nucleotide sequence ID" value="XM_005273394.3"/>
</dbReference>
<dbReference type="RefSeq" id="XP_011542685.1">
    <property type="nucleotide sequence ID" value="XM_011544383.2"/>
</dbReference>
<dbReference type="RefSeq" id="XP_011542686.1">
    <molecule id="Q9Y250-1"/>
    <property type="nucleotide sequence ID" value="XM_011544384.3"/>
</dbReference>
<dbReference type="RefSeq" id="XP_011542687.1">
    <molecule id="Q9Y250-1"/>
    <property type="nucleotide sequence ID" value="XM_011544385.3"/>
</dbReference>
<dbReference type="RefSeq" id="XP_011542688.1">
    <molecule id="Q9Y250-1"/>
    <property type="nucleotide sequence ID" value="XM_011544386.3"/>
</dbReference>
<dbReference type="RefSeq" id="XP_047277265.1">
    <molecule id="Q9Y250-1"/>
    <property type="nucleotide sequence ID" value="XM_047421309.1"/>
</dbReference>
<dbReference type="RefSeq" id="XP_054215654.1">
    <molecule id="Q9Y250-1"/>
    <property type="nucleotide sequence ID" value="XM_054359679.1"/>
</dbReference>
<dbReference type="RefSeq" id="XP_054215655.1">
    <molecule id="Q9Y250-1"/>
    <property type="nucleotide sequence ID" value="XM_054359680.1"/>
</dbReference>
<dbReference type="RefSeq" id="XP_054215656.1">
    <molecule id="Q9Y250-1"/>
    <property type="nucleotide sequence ID" value="XM_054359681.1"/>
</dbReference>
<dbReference type="PDB" id="8Y1U">
    <property type="method" value="X-ray"/>
    <property type="resolution" value="2.41 A"/>
    <property type="chains" value="B=346-368"/>
</dbReference>
<dbReference type="PDBsum" id="8Y1U"/>
<dbReference type="SMR" id="Q9Y250"/>
<dbReference type="BioGRID" id="116348">
    <property type="interactions" value="135"/>
</dbReference>
<dbReference type="FunCoup" id="Q9Y250">
    <property type="interactions" value="143"/>
</dbReference>
<dbReference type="IntAct" id="Q9Y250">
    <property type="interactions" value="105"/>
</dbReference>
<dbReference type="MINT" id="Q9Y250"/>
<dbReference type="STRING" id="9606.ENSP00000370981"/>
<dbReference type="TCDB" id="3.A.34.1.1">
    <property type="family name" value="the sorting nexins of the escrt complexes (sn-escrt)"/>
</dbReference>
<dbReference type="GlyGen" id="Q9Y250">
    <property type="glycosylation" value="2 sites, 1 O-linked glycan (1 site)"/>
</dbReference>
<dbReference type="iPTMnet" id="Q9Y250"/>
<dbReference type="PhosphoSitePlus" id="Q9Y250"/>
<dbReference type="BioMuta" id="LZTS1"/>
<dbReference type="DMDM" id="46396556"/>
<dbReference type="jPOST" id="Q9Y250"/>
<dbReference type="MassIVE" id="Q9Y250"/>
<dbReference type="PaxDb" id="9606-ENSP00000370981"/>
<dbReference type="PeptideAtlas" id="Q9Y250"/>
<dbReference type="ProteomicsDB" id="85646">
    <molecule id="Q9Y250-1"/>
</dbReference>
<dbReference type="ProteomicsDB" id="85647">
    <molecule id="Q9Y250-2"/>
</dbReference>
<dbReference type="ProteomicsDB" id="85648">
    <molecule id="Q9Y250-3"/>
</dbReference>
<dbReference type="ProteomicsDB" id="85649">
    <molecule id="Q9Y250-4"/>
</dbReference>
<dbReference type="ProteomicsDB" id="85650">
    <molecule id="Q9Y250-5"/>
</dbReference>
<dbReference type="ProteomicsDB" id="85651">
    <molecule id="Q9Y250-6"/>
</dbReference>
<dbReference type="ProteomicsDB" id="85652">
    <molecule id="Q9Y250-7"/>
</dbReference>
<dbReference type="Antibodypedia" id="1747">
    <property type="antibodies" value="242 antibodies from 27 providers"/>
</dbReference>
<dbReference type="DNASU" id="11178"/>
<dbReference type="Ensembl" id="ENST00000265801.6">
    <molecule id="Q9Y250-1"/>
    <property type="protein sequence ID" value="ENSP00000265801.6"/>
    <property type="gene ID" value="ENSG00000061337.16"/>
</dbReference>
<dbReference type="Ensembl" id="ENST00000381569.5">
    <molecule id="Q9Y250-1"/>
    <property type="protein sequence ID" value="ENSP00000370981.1"/>
    <property type="gene ID" value="ENSG00000061337.16"/>
</dbReference>
<dbReference type="Ensembl" id="ENST00000522290.5">
    <molecule id="Q9Y250-4"/>
    <property type="protein sequence ID" value="ENSP00000429263.1"/>
    <property type="gene ID" value="ENSG00000061337.16"/>
</dbReference>
<dbReference type="GeneID" id="11178"/>
<dbReference type="KEGG" id="hsa:11178"/>
<dbReference type="MANE-Select" id="ENST00000381569.5">
    <property type="protein sequence ID" value="ENSP00000370981.1"/>
    <property type="RefSeq nucleotide sequence ID" value="NM_021020.5"/>
    <property type="RefSeq protein sequence ID" value="NP_066300.1"/>
</dbReference>
<dbReference type="UCSC" id="uc003wzr.3">
    <molecule id="Q9Y250-1"/>
    <property type="organism name" value="human"/>
</dbReference>
<dbReference type="AGR" id="HGNC:13861"/>
<dbReference type="CTD" id="11178"/>
<dbReference type="DisGeNET" id="11178"/>
<dbReference type="GeneCards" id="LZTS1"/>
<dbReference type="HGNC" id="HGNC:13861">
    <property type="gene designation" value="LZTS1"/>
</dbReference>
<dbReference type="HPA" id="ENSG00000061337">
    <property type="expression patterns" value="Group enriched (brain, parathyroid gland)"/>
</dbReference>
<dbReference type="MalaCards" id="LZTS1"/>
<dbReference type="MIM" id="133239">
    <property type="type" value="phenotype"/>
</dbReference>
<dbReference type="MIM" id="606551">
    <property type="type" value="gene"/>
</dbReference>
<dbReference type="neXtProt" id="NX_Q9Y250"/>
<dbReference type="OpenTargets" id="ENSG00000061337"/>
<dbReference type="PharmGKB" id="PA30507"/>
<dbReference type="VEuPathDB" id="HostDB:ENSG00000061337"/>
<dbReference type="eggNOG" id="ENOG502QRU7">
    <property type="taxonomic scope" value="Eukaryota"/>
</dbReference>
<dbReference type="GeneTree" id="ENSGT00940000154078"/>
<dbReference type="HOGENOM" id="CLU_026379_2_1_1"/>
<dbReference type="InParanoid" id="Q9Y250"/>
<dbReference type="OMA" id="QKTRGSH"/>
<dbReference type="OrthoDB" id="10030037at2759"/>
<dbReference type="PAN-GO" id="Q9Y250">
    <property type="GO annotations" value="3 GO annotations based on evolutionary models"/>
</dbReference>
<dbReference type="PhylomeDB" id="Q9Y250"/>
<dbReference type="TreeFam" id="TF331420"/>
<dbReference type="PathwayCommons" id="Q9Y250"/>
<dbReference type="SignaLink" id="Q9Y250"/>
<dbReference type="BioGRID-ORCS" id="11178">
    <property type="hits" value="11 hits in 1151 CRISPR screens"/>
</dbReference>
<dbReference type="GeneWiki" id="LZTS1"/>
<dbReference type="GenomeRNAi" id="11178"/>
<dbReference type="Pharos" id="Q9Y250">
    <property type="development level" value="Tbio"/>
</dbReference>
<dbReference type="PRO" id="PR:Q9Y250"/>
<dbReference type="Proteomes" id="UP000005640">
    <property type="component" value="Chromosome 8"/>
</dbReference>
<dbReference type="RNAct" id="Q9Y250">
    <property type="molecule type" value="protein"/>
</dbReference>
<dbReference type="Bgee" id="ENSG00000061337">
    <property type="expression patterns" value="Expressed in cortical plate and 134 other cell types or tissues"/>
</dbReference>
<dbReference type="GO" id="GO:0005737">
    <property type="term" value="C:cytoplasm"/>
    <property type="evidence" value="ECO:0007669"/>
    <property type="project" value="UniProtKB-SubCell"/>
</dbReference>
<dbReference type="GO" id="GO:0043197">
    <property type="term" value="C:dendritic spine"/>
    <property type="evidence" value="ECO:0000318"/>
    <property type="project" value="GO_Central"/>
</dbReference>
<dbReference type="GO" id="GO:0098978">
    <property type="term" value="C:glutamatergic synapse"/>
    <property type="evidence" value="ECO:0007669"/>
    <property type="project" value="Ensembl"/>
</dbReference>
<dbReference type="GO" id="GO:0005886">
    <property type="term" value="C:plasma membrane"/>
    <property type="evidence" value="ECO:0007669"/>
    <property type="project" value="UniProtKB-SubCell"/>
</dbReference>
<dbReference type="GO" id="GO:0014069">
    <property type="term" value="C:postsynaptic density"/>
    <property type="evidence" value="ECO:0007669"/>
    <property type="project" value="UniProtKB-SubCell"/>
</dbReference>
<dbReference type="GO" id="GO:0016242">
    <property type="term" value="P:negative regulation of macroautophagy"/>
    <property type="evidence" value="ECO:0000315"/>
    <property type="project" value="BHF-UCL"/>
</dbReference>
<dbReference type="GO" id="GO:0048814">
    <property type="term" value="P:regulation of dendrite morphogenesis"/>
    <property type="evidence" value="ECO:0000318"/>
    <property type="project" value="GO_Central"/>
</dbReference>
<dbReference type="GO" id="GO:0150052">
    <property type="term" value="P:regulation of postsynapse assembly"/>
    <property type="evidence" value="ECO:0007669"/>
    <property type="project" value="Ensembl"/>
</dbReference>
<dbReference type="GO" id="GO:0048167">
    <property type="term" value="P:regulation of synaptic plasticity"/>
    <property type="evidence" value="ECO:0000318"/>
    <property type="project" value="GO_Central"/>
</dbReference>
<dbReference type="InterPro" id="IPR045329">
    <property type="entry name" value="LZTS"/>
</dbReference>
<dbReference type="PANTHER" id="PTHR19354:SF5">
    <property type="entry name" value="ZIPPER PUTATIVE TUMOR SUPPRESSOR 1-RELATED"/>
    <property type="match status" value="1"/>
</dbReference>
<dbReference type="PANTHER" id="PTHR19354">
    <property type="entry name" value="ZIPPER PUTATIVE TUMOR SUPPRESSOR 2 HOMOLOG-LIKE PROTEIN-RELATED"/>
    <property type="match status" value="1"/>
</dbReference>
<dbReference type="Pfam" id="PF06818">
    <property type="entry name" value="Fez1"/>
    <property type="match status" value="1"/>
</dbReference>
<feature type="initiator methionine" description="Removed">
    <location>
        <position position="1"/>
    </location>
</feature>
<feature type="chain" id="PRO_0000182971" description="Leucine zipper putative tumor suppressor 1">
    <location>
        <begin position="2"/>
        <end position="596"/>
    </location>
</feature>
<feature type="region of interest" description="Disordered" evidence="3">
    <location>
        <begin position="136"/>
        <end position="193"/>
    </location>
</feature>
<feature type="region of interest" description="Disordered" evidence="3">
    <location>
        <begin position="295"/>
        <end position="324"/>
    </location>
</feature>
<feature type="coiled-coil region" evidence="2">
    <location>
        <begin position="256"/>
        <end position="374"/>
    </location>
</feature>
<feature type="compositionally biased region" description="Basic and acidic residues" evidence="3">
    <location>
        <begin position="153"/>
        <end position="162"/>
    </location>
</feature>
<feature type="compositionally biased region" description="Low complexity" evidence="3">
    <location>
        <begin position="178"/>
        <end position="190"/>
    </location>
</feature>
<feature type="compositionally biased region" description="Basic and acidic residues" evidence="3">
    <location>
        <begin position="295"/>
        <end position="310"/>
    </location>
</feature>
<feature type="lipid moiety-binding region" description="N-myristoyl glycine" evidence="1">
    <location>
        <position position="2"/>
    </location>
</feature>
<feature type="splice variant" id="VSP_009940" description="In isoform 7." evidence="7">
    <original>SSSKMGKSEDFFYIKVSQKARG</original>
    <variation>AMTRCPRASSMSGSCGRRRRRR</variation>
    <location>
        <begin position="55"/>
        <end position="76"/>
    </location>
</feature>
<feature type="splice variant" id="VSP_009941" description="In isoform 7." evidence="7">
    <location>
        <begin position="77"/>
        <end position="596"/>
    </location>
</feature>
<feature type="splice variant" id="VSP_009942" description="In isoform 6." evidence="7">
    <location>
        <begin position="186"/>
        <end position="571"/>
    </location>
</feature>
<feature type="splice variant" id="VSP_009943" description="In isoform 5." evidence="7">
    <location>
        <begin position="454"/>
        <end position="545"/>
    </location>
</feature>
<feature type="splice variant" id="VSP_009944" description="In isoform 4." evidence="7">
    <location>
        <begin position="468"/>
        <end position="526"/>
    </location>
</feature>
<feature type="splice variant" id="VSP_009945" description="In isoform 3." evidence="7">
    <location>
        <begin position="471"/>
        <end position="503"/>
    </location>
</feature>
<feature type="splice variant" id="VSP_009946" description="In isoform 2." evidence="7">
    <location>
        <begin position="505"/>
        <end position="527"/>
    </location>
</feature>
<feature type="sequence variant" id="VAR_018274" description="Found in an esophageal cancer sample; esophageal squamous cell carcinoma; somatic mutation; dbSNP:rs28937897." evidence="4">
    <original>S</original>
    <variation>P</variation>
    <location>
        <position position="29"/>
    </location>
</feature>
<feature type="sequence variant" id="VAR_053490" description="In dbSNP:rs34620053.">
    <original>S</original>
    <variation>F</variation>
    <location>
        <position position="50"/>
    </location>
</feature>
<feature type="sequence variant" id="VAR_018275" description="Found in an esophageal cancer sample; esophageal squamous cell carcinoma; somatic mutation; dbSNP:rs119473032." evidence="4">
    <original>K</original>
    <variation>E</variation>
    <location>
        <position position="119"/>
    </location>
</feature>
<feature type="sequence variant" id="VAR_018276" description="In dbSNP:rs723874.">
    <original>L</original>
    <variation>V</variation>
    <location>
        <position position="475"/>
    </location>
</feature>
<feature type="helix" evidence="9">
    <location>
        <begin position="347"/>
        <end position="363"/>
    </location>
</feature>
<feature type="helix" evidence="9">
    <location>
        <begin position="364"/>
        <end position="367"/>
    </location>
</feature>
<evidence type="ECO:0000250" key="1"/>
<evidence type="ECO:0000255" key="2"/>
<evidence type="ECO:0000256" key="3">
    <source>
        <dbReference type="SAM" id="MobiDB-lite"/>
    </source>
</evidence>
<evidence type="ECO:0000269" key="4">
    <source>
    </source>
</evidence>
<evidence type="ECO:0000269" key="5">
    <source>
    </source>
</evidence>
<evidence type="ECO:0000269" key="6">
    <source>
    </source>
</evidence>
<evidence type="ECO:0000303" key="7">
    <source>
    </source>
</evidence>
<evidence type="ECO:0000305" key="8"/>
<evidence type="ECO:0007829" key="9">
    <source>
        <dbReference type="PDB" id="8Y1U"/>
    </source>
</evidence>
<reference key="1">
    <citation type="journal article" date="1999" name="Proc. Natl. Acad. Sci. U.S.A.">
        <title>The FEZ1 gene at chromosome 8p22 encodes a leucine-zipper protein, and its expression is altered in multiple human tumors.</title>
        <authorList>
            <person name="Ishii H."/>
            <person name="Baffa R."/>
            <person name="Numata S."/>
            <person name="Murakumo Y."/>
            <person name="Rattan S."/>
            <person name="Inoue H."/>
            <person name="Mori M."/>
            <person name="Fidanza V."/>
            <person name="Alder H."/>
            <person name="Croce C.M."/>
        </authorList>
    </citation>
    <scope>NUCLEOTIDE SEQUENCE [GENOMIC DNA / MRNA] (ISOFORMS 1; 2; 3; 4; 5; 6 AND 7)</scope>
    <scope>INVOLVEMENT IN ESCR</scope>
    <scope>VARIANTS PRO-29 AND GLU-119</scope>
    <scope>FUNCTION</scope>
    <scope>TISSUE SPECIFICITY</scope>
</reference>
<reference key="2">
    <citation type="submission" date="2005-09" db="EMBL/GenBank/DDBJ databases">
        <authorList>
            <person name="Mural R.J."/>
            <person name="Istrail S."/>
            <person name="Sutton G.G."/>
            <person name="Florea L."/>
            <person name="Halpern A.L."/>
            <person name="Mobarry C.M."/>
            <person name="Lippert R."/>
            <person name="Walenz B."/>
            <person name="Shatkay H."/>
            <person name="Dew I."/>
            <person name="Miller J.R."/>
            <person name="Flanigan M.J."/>
            <person name="Edwards N.J."/>
            <person name="Bolanos R."/>
            <person name="Fasulo D."/>
            <person name="Halldorsson B.V."/>
            <person name="Hannenhalli S."/>
            <person name="Turner R."/>
            <person name="Yooseph S."/>
            <person name="Lu F."/>
            <person name="Nusskern D.R."/>
            <person name="Shue B.C."/>
            <person name="Zheng X.H."/>
            <person name="Zhong F."/>
            <person name="Delcher A.L."/>
            <person name="Huson D.H."/>
            <person name="Kravitz S.A."/>
            <person name="Mouchard L."/>
            <person name="Reinert K."/>
            <person name="Remington K.A."/>
            <person name="Clark A.G."/>
            <person name="Waterman M.S."/>
            <person name="Eichler E.E."/>
            <person name="Adams M.D."/>
            <person name="Hunkapiller M.W."/>
            <person name="Myers E.W."/>
            <person name="Venter J.C."/>
        </authorList>
    </citation>
    <scope>NUCLEOTIDE SEQUENCE [LARGE SCALE GENOMIC DNA]</scope>
</reference>
<reference key="3">
    <citation type="journal article" date="2004" name="Genome Res.">
        <title>The status, quality, and expansion of the NIH full-length cDNA project: the Mammalian Gene Collection (MGC).</title>
        <authorList>
            <consortium name="The MGC Project Team"/>
        </authorList>
    </citation>
    <scope>NUCLEOTIDE SEQUENCE [LARGE SCALE MRNA] (ISOFORM 1)</scope>
    <source>
        <tissue>Fetal brain</tissue>
    </source>
</reference>
<reference key="4">
    <citation type="journal article" date="2001" name="Oncogene">
        <title>Functional identification of LZTS1 as a candidate prostate tumor suppressor gene on human chromosome 8p22.</title>
        <authorList>
            <person name="Cabeza-Arvelaiz Y."/>
            <person name="Sepulveda J.L."/>
            <person name="Lebovitz R.M."/>
            <person name="Thompson T.C."/>
            <person name="Chinault A.C."/>
        </authorList>
    </citation>
    <scope>FUNCTION</scope>
    <scope>ALTERNATIVE SPLICING</scope>
</reference>
<reference key="5">
    <citation type="journal article" date="2001" name="Proc. Natl. Acad. Sci. U.S.A.">
        <title>FEZ1/LZTS1 gene at 8p22 suppresses cancer cell growth and regulates mitosis.</title>
        <authorList>
            <person name="Ishii H."/>
            <person name="Vecchione A."/>
            <person name="Murakumo Y."/>
            <person name="Baldassarre G."/>
            <person name="Numata S."/>
            <person name="Trapasso F."/>
            <person name="Alder H."/>
            <person name="Baffa R."/>
            <person name="Croce C.M."/>
        </authorList>
    </citation>
    <scope>FUNCTION</scope>
    <scope>PHOSPHORYLATION</scope>
    <scope>SUBCELLULAR LOCATION</scope>
    <scope>INTERACTION WITH EEF1G AND CDK1</scope>
</reference>
<reference key="6">
    <citation type="journal article" date="2006" name="J. Biol. Chem.">
        <title>FEZ1 dimerization and interaction with transcription regulatory proteins involves its coiled-coil region.</title>
        <authorList>
            <person name="Assmann E.M."/>
            <person name="Alborghetti M.R."/>
            <person name="Camargo M.E.R."/>
            <person name="Kobarg J."/>
        </authorList>
    </citation>
    <scope>INTERACTION WITH TLK2</scope>
</reference>
<reference key="7">
    <citation type="journal article" date="2009" name="Sci. Signal.">
        <title>Quantitative phosphoproteomic analysis of T cell receptor signaling reveals system-wide modulation of protein-protein interactions.</title>
        <authorList>
            <person name="Mayya V."/>
            <person name="Lundgren D.H."/>
            <person name="Hwang S.-I."/>
            <person name="Rezaul K."/>
            <person name="Wu L."/>
            <person name="Eng J.K."/>
            <person name="Rodionov V."/>
            <person name="Han D.K."/>
        </authorList>
    </citation>
    <scope>IDENTIFICATION BY MASS SPECTROMETRY [LARGE SCALE ANALYSIS]</scope>
    <source>
        <tissue>Leukemic T-cell</tissue>
    </source>
</reference>
<name>LZTS1_HUMAN</name>
<protein>
    <recommendedName>
        <fullName>Leucine zipper putative tumor suppressor 1</fullName>
    </recommendedName>
    <alternativeName>
        <fullName>F37/esophageal cancer-related gene-coding leucine-zipper motif</fullName>
    </alternativeName>
    <alternativeName>
        <fullName>Fez1</fullName>
    </alternativeName>
</protein>
<keyword id="KW-0002">3D-structure</keyword>
<keyword id="KW-0025">Alternative splicing</keyword>
<keyword id="KW-0131">Cell cycle</keyword>
<keyword id="KW-1003">Cell membrane</keyword>
<keyword id="KW-0966">Cell projection</keyword>
<keyword id="KW-0175">Coiled coil</keyword>
<keyword id="KW-0963">Cytoplasm</keyword>
<keyword id="KW-0449">Lipoprotein</keyword>
<keyword id="KW-0472">Membrane</keyword>
<keyword id="KW-0519">Myristate</keyword>
<keyword id="KW-0597">Phosphoprotein</keyword>
<keyword id="KW-1267">Proteomics identification</keyword>
<keyword id="KW-1185">Reference proteome</keyword>
<keyword id="KW-0770">Synapse</keyword>
<keyword id="KW-0043">Tumor suppressor</keyword>
<accession>Q9Y250</accession>
<accession>D3DSQ6</accession>
<accession>Q9Y5V7</accession>
<accession>Q9Y5V8</accession>
<accession>Q9Y5V9</accession>
<accession>Q9Y5W0</accession>
<accession>Q9Y5W1</accession>
<accession>Q9Y5W2</accession>
<gene>
    <name type="primary">LZTS1</name>
    <name type="synonym">FEZ1</name>
</gene>
<sequence length="596" mass="66613">MGSVSSLISGHSFHSKHCRASQYKLRKSSHLKKLNRYSDGLLRFGFSQDSGHGKSSSKMGKSEDFFYIKVSQKARGSHHPDYTALSSGDLGGQAGVDFDPSTPPKLMPFSNQLEMGSEKGAVRPTAFKPVLPRSGAILHSSPESASHQLHPAPPDKPKEQELKPGLCSGALSDSGRNSMSSLPTHSTSSSYQLDPLVTPVGPTSRFGGSAHNITQGIVLQDSNMMSLKALSFSDGGSKLGHSNKADKGPSCVRSPISTDECSIQELEQKLLEREGALQKLQRSFEEKELASSLAYEERPRRCRDELEGPEPKGGNKLKQASQKSQRAQQVLHLQVLQLQQEKRQLRQELESLMKEQDLLETKLRSYEREKTSFGPALEETQWEVCQKSGEISLLKQQLKESQTEVNAKASEILGLKAQLKDTRGKLEGLELRTQDLEGALRTKGLELEVCENELQRKKNEAELLREKVNLLEQELQELRAQAALARDMGPPTFPEDVPALQRELERLRAELREERQGHDQMSSGFQHERLVWKEEKEKVIQYQKQLQQSYVAMYQRNQRLEKALQQLARGDSAGEPLEVDLEGADIPYEDIIATEI</sequence>
<organism>
    <name type="scientific">Homo sapiens</name>
    <name type="common">Human</name>
    <dbReference type="NCBI Taxonomy" id="9606"/>
    <lineage>
        <taxon>Eukaryota</taxon>
        <taxon>Metazoa</taxon>
        <taxon>Chordata</taxon>
        <taxon>Craniata</taxon>
        <taxon>Vertebrata</taxon>
        <taxon>Euteleostomi</taxon>
        <taxon>Mammalia</taxon>
        <taxon>Eutheria</taxon>
        <taxon>Euarchontoglires</taxon>
        <taxon>Primates</taxon>
        <taxon>Haplorrhini</taxon>
        <taxon>Catarrhini</taxon>
        <taxon>Hominidae</taxon>
        <taxon>Homo</taxon>
    </lineage>
</organism>
<comment type="function">
    <text evidence="4 5 6">Involved in the regulation of cell growth. May stabilize the active CDC2-cyclin B1 complex and thereby contribute to the regulation of the cell cycle and the prevention of uncontrolled cell proliferation. May act as a tumor suppressor.</text>
</comment>
<comment type="subunit">
    <text>Binds EEF1G, TLK2 and CDK1.</text>
</comment>
<comment type="interaction">
    <interactant intactId="EBI-1216080">
        <id>Q9Y250</id>
    </interactant>
    <interactant intactId="EBI-17286414">
        <id>A2BDD9</id>
        <label>AMOT</label>
    </interactant>
    <organismsDiffer>false</organismsDiffer>
    <experiments>3</experiments>
</comment>
<comment type="interaction">
    <interactant intactId="EBI-1216080">
        <id>Q9Y250</id>
    </interactant>
    <interactant intactId="EBI-541426">
        <id>Q9BXS5</id>
        <label>AP1M1</label>
    </interactant>
    <organismsDiffer>false</organismsDiffer>
    <experiments>3</experiments>
</comment>
<comment type="interaction">
    <interactant intactId="EBI-1216080">
        <id>Q9Y250</id>
    </interactant>
    <interactant intactId="EBI-358049">
        <id>Q13895</id>
        <label>BYSL</label>
    </interactant>
    <organismsDiffer>false</organismsDiffer>
    <experiments>3</experiments>
</comment>
<comment type="interaction">
    <interactant intactId="EBI-1216080">
        <id>Q9Y250</id>
    </interactant>
    <interactant intactId="EBI-11530605">
        <id>Q9H257-2</id>
        <label>CARD9</label>
    </interactant>
    <organismsDiffer>false</organismsDiffer>
    <experiments>3</experiments>
</comment>
<comment type="interaction">
    <interactant intactId="EBI-1216080">
        <id>Q9Y250</id>
    </interactant>
    <interactant intactId="EBI-10171570">
        <id>Q68D86</id>
        <label>CCDC102B</label>
    </interactant>
    <organismsDiffer>false</organismsDiffer>
    <experiments>3</experiments>
</comment>
<comment type="interaction">
    <interactant intactId="EBI-1216080">
        <id>Q9Y250</id>
    </interactant>
    <interactant intactId="EBI-744556">
        <id>Q96HB5</id>
        <label>CCDC120</label>
    </interactant>
    <organismsDiffer>false</organismsDiffer>
    <experiments>3</experiments>
</comment>
<comment type="interaction">
    <interactant intactId="EBI-1216080">
        <id>Q9Y250</id>
    </interactant>
    <interactant intactId="EBI-10961312">
        <id>Q8IYE1</id>
        <label>CCDC13</label>
    </interactant>
    <organismsDiffer>false</organismsDiffer>
    <experiments>3</experiments>
</comment>
<comment type="interaction">
    <interactant intactId="EBI-1216080">
        <id>Q9Y250</id>
    </interactant>
    <interactant intactId="EBI-10961624">
        <id>Q2TAC2-2</id>
        <label>CCDC57</label>
    </interactant>
    <organismsDiffer>false</organismsDiffer>
    <experiments>3</experiments>
</comment>
<comment type="interaction">
    <interactant intactId="EBI-1216080">
        <id>Q9Y250</id>
    </interactant>
    <interactant intactId="EBI-10175300">
        <id>Q8TD31-3</id>
        <label>CCHCR1</label>
    </interactant>
    <organismsDiffer>false</organismsDiffer>
    <experiments>3</experiments>
</comment>
<comment type="interaction">
    <interactant intactId="EBI-1216080">
        <id>Q9Y250</id>
    </interactant>
    <interactant intactId="EBI-396137">
        <id>Q9UJX2</id>
        <label>CDC23</label>
    </interactant>
    <organismsDiffer>false</organismsDiffer>
    <experiments>3</experiments>
</comment>
<comment type="interaction">
    <interactant intactId="EBI-1216080">
        <id>Q9Y250</id>
    </interactant>
    <interactant intactId="EBI-974439">
        <id>P30307</id>
        <label>CDC25C</label>
    </interactant>
    <organismsDiffer>false</organismsDiffer>
    <experiments>2</experiments>
</comment>
<comment type="interaction">
    <interactant intactId="EBI-1216080">
        <id>Q9Y250</id>
    </interactant>
    <interactant intactId="EBI-295634">
        <id>Q16543</id>
        <label>CDC37</label>
    </interactant>
    <organismsDiffer>false</organismsDiffer>
    <experiments>3</experiments>
</comment>
<comment type="interaction">
    <interactant intactId="EBI-1216080">
        <id>Q9Y250</id>
    </interactant>
    <interactant intactId="EBI-374980">
        <id>O00311</id>
        <label>CDC7</label>
    </interactant>
    <organismsDiffer>false</organismsDiffer>
    <experiments>3</experiments>
</comment>
<comment type="interaction">
    <interactant intactId="EBI-1216080">
        <id>Q9Y250</id>
    </interactant>
    <interactant intactId="EBI-11123098">
        <id>Q9Y592-2</id>
        <label>CEP83</label>
    </interactant>
    <organismsDiffer>false</organismsDiffer>
    <experiments>3</experiments>
</comment>
<comment type="interaction">
    <interactant intactId="EBI-1216080">
        <id>Q9Y250</id>
    </interactant>
    <interactant intactId="EBI-456371">
        <id>P61024</id>
        <label>CKS1B</label>
    </interactant>
    <organismsDiffer>false</organismsDiffer>
    <experiments>3</experiments>
</comment>
<comment type="interaction">
    <interactant intactId="EBI-1216080">
        <id>Q9Y250</id>
    </interactant>
    <interactant intactId="EBI-389449">
        <id>Q14746</id>
        <label>COG2</label>
    </interactant>
    <organismsDiffer>false</organismsDiffer>
    <experiments>3</experiments>
</comment>
<comment type="interaction">
    <interactant intactId="EBI-1216080">
        <id>Q9Y250</id>
    </interactant>
    <interactant intactId="EBI-359063">
        <id>P53618</id>
        <label>COPB1</label>
    </interactant>
    <organismsDiffer>false</organismsDiffer>
    <experiments>3</experiments>
</comment>
<comment type="interaction">
    <interactant intactId="EBI-1216080">
        <id>Q9Y250</id>
    </interactant>
    <interactant intactId="EBI-5453285">
        <id>Q2TBE0</id>
        <label>CWF19L2</label>
    </interactant>
    <organismsDiffer>false</organismsDiffer>
    <experiments>3</experiments>
</comment>
<comment type="interaction">
    <interactant intactId="EBI-1216080">
        <id>Q9Y250</id>
    </interactant>
    <interactant intactId="EBI-351257">
        <id>P26196</id>
        <label>DDX6</label>
    </interactant>
    <organismsDiffer>false</organismsDiffer>
    <experiments>3</experiments>
</comment>
<comment type="interaction">
    <interactant intactId="EBI-1216080">
        <id>Q9Y250</id>
    </interactant>
    <interactant intactId="EBI-742350">
        <id>Q14241</id>
        <label>ELOA</label>
    </interactant>
    <organismsDiffer>false</organismsDiffer>
    <experiments>3</experiments>
</comment>
<comment type="interaction">
    <interactant intactId="EBI-1216080">
        <id>Q9Y250</id>
    </interactant>
    <interactant intactId="EBI-744099">
        <id>Q9H0I2</id>
        <label>ENKD1</label>
    </interactant>
    <organismsDiffer>false</organismsDiffer>
    <experiments>3</experiments>
</comment>
<comment type="interaction">
    <interactant intactId="EBI-1216080">
        <id>Q9Y250</id>
    </interactant>
    <interactant intactId="EBI-742102">
        <id>Q8IYI6</id>
        <label>EXOC8</label>
    </interactant>
    <organismsDiffer>false</organismsDiffer>
    <experiments>3</experiments>
</comment>
<comment type="interaction">
    <interactant intactId="EBI-1216080">
        <id>Q9Y250</id>
    </interactant>
    <interactant intactId="EBI-719941">
        <id>Q3B820</id>
        <label>FAM161A</label>
    </interactant>
    <organismsDiffer>false</organismsDiffer>
    <experiments>5</experiments>
</comment>
<comment type="interaction">
    <interactant intactId="EBI-1216080">
        <id>Q9Y250</id>
    </interactant>
    <interactant intactId="EBI-7225287">
        <id>Q96MY7</id>
        <label>FAM161B</label>
    </interactant>
    <organismsDiffer>false</organismsDiffer>
    <experiments>3</experiments>
</comment>
<comment type="interaction">
    <interactant intactId="EBI-1216080">
        <id>Q9Y250</id>
    </interactant>
    <interactant intactId="EBI-742802">
        <id>Q9Y247</id>
        <label>FAM50B</label>
    </interactant>
    <organismsDiffer>false</organismsDiffer>
    <experiments>3</experiments>
</comment>
<comment type="interaction">
    <interactant intactId="EBI-1216080">
        <id>Q9Y250</id>
    </interactant>
    <interactant intactId="EBI-10290827">
        <id>Q96LP2</id>
        <label>FAM81B</label>
    </interactant>
    <organismsDiffer>false</organismsDiffer>
    <experiments>3</experiments>
</comment>
<comment type="interaction">
    <interactant intactId="EBI-1216080">
        <id>Q9Y250</id>
    </interactant>
    <interactant intactId="EBI-6658203">
        <id>Q86YD7</id>
        <label>FAM90A1</label>
    </interactant>
    <organismsDiffer>false</organismsDiffer>
    <experiments>3</experiments>
</comment>
<comment type="interaction">
    <interactant intactId="EBI-1216080">
        <id>Q9Y250</id>
    </interactant>
    <interactant intactId="EBI-6448805">
        <id>Q96KD3-2</id>
        <label>GARIN1B</label>
    </interactant>
    <organismsDiffer>false</organismsDiffer>
    <experiments>3</experiments>
</comment>
<comment type="interaction">
    <interactant intactId="EBI-1216080">
        <id>Q9Y250</id>
    </interactant>
    <interactant intactId="EBI-1052570">
        <id>O95995</id>
        <label>GAS8</label>
    </interactant>
    <organismsDiffer>false</organismsDiffer>
    <experiments>3</experiments>
</comment>
<comment type="interaction">
    <interactant intactId="EBI-1216080">
        <id>Q9Y250</id>
    </interactant>
    <interactant intactId="EBI-6164177">
        <id>Q92805</id>
        <label>GOLGA1</label>
    </interactant>
    <organismsDiffer>false</organismsDiffer>
    <experiments>3</experiments>
</comment>
<comment type="interaction">
    <interactant intactId="EBI-1216080">
        <id>Q9Y250</id>
    </interactant>
    <interactant intactId="EBI-746309">
        <id>Q92917</id>
        <label>GPKOW</label>
    </interactant>
    <organismsDiffer>false</organismsDiffer>
    <experiments>3</experiments>
</comment>
<comment type="interaction">
    <interactant intactId="EBI-1216080">
        <id>Q9Y250</id>
    </interactant>
    <interactant intactId="EBI-12233645">
        <id>Q6ZQW0-2</id>
        <label>IDO2</label>
    </interactant>
    <organismsDiffer>false</organismsDiffer>
    <experiments>3</experiments>
</comment>
<comment type="interaction">
    <interactant intactId="EBI-1216080">
        <id>Q9Y250</id>
    </interactant>
    <interactant intactId="EBI-2556193">
        <id>Q63ZY3</id>
        <label>KANK2</label>
    </interactant>
    <organismsDiffer>false</organismsDiffer>
    <experiments>3</experiments>
</comment>
<comment type="interaction">
    <interactant intactId="EBI-1216080">
        <id>Q9Y250</id>
    </interactant>
    <interactant intactId="EBI-399080">
        <id>Q92993</id>
        <label>KAT5</label>
    </interactant>
    <organismsDiffer>false</organismsDiffer>
    <experiments>3</experiments>
</comment>
<comment type="interaction">
    <interactant intactId="EBI-1216080">
        <id>Q9Y250</id>
    </interactant>
    <interactant intactId="EBI-12024294">
        <id>Q674X7-2</id>
        <label>KAZN</label>
    </interactant>
    <organismsDiffer>false</organismsDiffer>
    <experiments>3</experiments>
</comment>
<comment type="interaction">
    <interactant intactId="EBI-1216080">
        <id>Q9Y250</id>
    </interactant>
    <interactant intactId="EBI-710124">
        <id>O60341</id>
        <label>KDM1A</label>
    </interactant>
    <organismsDiffer>false</organismsDiffer>
    <experiments>3</experiments>
</comment>
<comment type="interaction">
    <interactant intactId="EBI-1216080">
        <id>Q9Y250</id>
    </interactant>
    <interactant intactId="EBI-8472129">
        <id>Q9HAQ2</id>
        <label>KIF9</label>
    </interactant>
    <organismsDiffer>false</organismsDiffer>
    <experiments>3</experiments>
</comment>
<comment type="interaction">
    <interactant intactId="EBI-1216080">
        <id>Q9Y250</id>
    </interactant>
    <interactant intactId="EBI-14069005">
        <id>Q9BVG8-5</id>
        <label>KIFC3</label>
    </interactant>
    <organismsDiffer>false</organismsDiffer>
    <experiments>3</experiments>
</comment>
<comment type="interaction">
    <interactant intactId="EBI-1216080">
        <id>Q9Y250</id>
    </interactant>
    <interactant intactId="EBI-726510">
        <id>Q96BZ8</id>
        <label>LENG1</label>
    </interactant>
    <organismsDiffer>false</organismsDiffer>
    <experiments>3</experiments>
</comment>
<comment type="interaction">
    <interactant intactId="EBI-1216080">
        <id>Q9Y250</id>
    </interactant>
    <interactant intactId="EBI-2830427">
        <id>Q03252</id>
        <label>LMNB2</label>
    </interactant>
    <organismsDiffer>false</organismsDiffer>
    <experiments>3</experiments>
</comment>
<comment type="interaction">
    <interactant intactId="EBI-1216080">
        <id>Q9Y250</id>
    </interactant>
    <interactant intactId="EBI-8639312">
        <id>P25800</id>
        <label>LMO1</label>
    </interactant>
    <organismsDiffer>false</organismsDiffer>
    <experiments>3</experiments>
</comment>
<comment type="interaction">
    <interactant intactId="EBI-1216080">
        <id>Q9Y250</id>
    </interactant>
    <interactant intactId="EBI-11959475">
        <id>P25791-3</id>
        <label>LMO2</label>
    </interactant>
    <organismsDiffer>false</organismsDiffer>
    <experiments>3</experiments>
</comment>
<comment type="interaction">
    <interactant intactId="EBI-1216080">
        <id>Q9Y250</id>
    </interactant>
    <interactant intactId="EBI-11742507">
        <id>Q8TAP4-4</id>
        <label>LMO3</label>
    </interactant>
    <organismsDiffer>false</organismsDiffer>
    <experiments>3</experiments>
</comment>
<comment type="interaction">
    <interactant intactId="EBI-1216080">
        <id>Q9Y250</id>
    </interactant>
    <interactant intactId="EBI-2798728">
        <id>P61968</id>
        <label>LMO4</label>
    </interactant>
    <organismsDiffer>false</organismsDiffer>
    <experiments>3</experiments>
</comment>
<comment type="interaction">
    <interactant intactId="EBI-1216080">
        <id>Q9Y250</id>
    </interactant>
    <interactant intactId="EBI-739832">
        <id>Q8TBB1</id>
        <label>LNX1</label>
    </interactant>
    <organismsDiffer>false</organismsDiffer>
    <experiments>3</experiments>
</comment>
<comment type="interaction">
    <interactant intactId="EBI-1216080">
        <id>Q9Y250</id>
    </interactant>
    <interactant intactId="EBI-347416">
        <id>Q9Y333</id>
        <label>LSM2</label>
    </interactant>
    <organismsDiffer>false</organismsDiffer>
    <experiments>3</experiments>
</comment>
<comment type="interaction">
    <interactant intactId="EBI-1216080">
        <id>Q9Y250</id>
    </interactant>
    <interactant intactId="EBI-713568">
        <id>P45984</id>
        <label>MAPK9</label>
    </interactant>
    <organismsDiffer>false</organismsDiffer>
    <experiments>3</experiments>
</comment>
<comment type="interaction">
    <interactant intactId="EBI-1216080">
        <id>Q9Y250</id>
    </interactant>
    <interactant intactId="EBI-348259">
        <id>Q96EZ8</id>
        <label>MCRS1</label>
    </interactant>
    <organismsDiffer>false</organismsDiffer>
    <experiments>3</experiments>
</comment>
<comment type="interaction">
    <interactant intactId="EBI-1216080">
        <id>Q9Y250</id>
    </interactant>
    <interactant intactId="EBI-8652459">
        <id>Q8WXB1</id>
        <label>METTL21A</label>
    </interactant>
    <organismsDiffer>false</organismsDiffer>
    <experiments>3</experiments>
</comment>
<comment type="interaction">
    <interactant intactId="EBI-1216080">
        <id>Q9Y250</id>
    </interactant>
    <interactant intactId="EBI-1048159">
        <id>P55081</id>
        <label>MFAP1</label>
    </interactant>
    <organismsDiffer>false</organismsDiffer>
    <experiments>3</experiments>
</comment>
<comment type="interaction">
    <interactant intactId="EBI-1216080">
        <id>Q9Y250</id>
    </interactant>
    <interactant intactId="EBI-14086479">
        <id>Q8IVT4</id>
        <label>MGC50722</label>
    </interactant>
    <organismsDiffer>false</organismsDiffer>
    <experiments>3</experiments>
</comment>
<comment type="interaction">
    <interactant intactId="EBI-1216080">
        <id>Q9Y250</id>
    </interactant>
    <interactant intactId="EBI-10172526">
        <id>Q9UJV3-2</id>
        <label>MID2</label>
    </interactant>
    <organismsDiffer>false</organismsDiffer>
    <experiments>3</experiments>
</comment>
<comment type="interaction">
    <interactant intactId="EBI-1216080">
        <id>Q9Y250</id>
    </interactant>
    <interactant intactId="EBI-14083835">
        <id>O94964-4</id>
        <label>MTCL2</label>
    </interactant>
    <organismsDiffer>false</organismsDiffer>
    <experiments>3</experiments>
</comment>
<comment type="interaction">
    <interactant intactId="EBI-1216080">
        <id>Q9Y250</id>
    </interactant>
    <interactant intactId="EBI-11750983">
        <id>Q9HC98-4</id>
        <label>NEK6</label>
    </interactant>
    <organismsDiffer>false</organismsDiffer>
    <experiments>3</experiments>
</comment>
<comment type="interaction">
    <interactant intactId="EBI-1216080">
        <id>Q9Y250</id>
    </interactant>
    <interactant intactId="EBI-741158">
        <id>Q96HA8</id>
        <label>NTAQ1</label>
    </interactant>
    <organismsDiffer>false</organismsDiffer>
    <experiments>3</experiments>
</comment>
<comment type="interaction">
    <interactant intactId="EBI-1216080">
        <id>Q9Y250</id>
    </interactant>
    <interactant intactId="EBI-14066006">
        <id>Q4G0R1</id>
        <label>PIBF1</label>
    </interactant>
    <organismsDiffer>false</organismsDiffer>
    <experiments>3</experiments>
</comment>
<comment type="interaction">
    <interactant intactId="EBI-1216080">
        <id>Q9Y250</id>
    </interactant>
    <interactant intactId="EBI-79165">
        <id>Q9NRD5</id>
        <label>PICK1</label>
    </interactant>
    <organismsDiffer>false</organismsDiffer>
    <experiments>3</experiments>
</comment>
<comment type="interaction">
    <interactant intactId="EBI-1216080">
        <id>Q9Y250</id>
    </interactant>
    <interactant intactId="EBI-12069346">
        <id>Q6IQ23-2</id>
        <label>PLEKHA7</label>
    </interactant>
    <organismsDiffer>false</organismsDiffer>
    <experiments>3</experiments>
</comment>
<comment type="interaction">
    <interactant intactId="EBI-1216080">
        <id>Q9Y250</id>
    </interactant>
    <interactant intactId="EBI-1055079">
        <id>O15160</id>
        <label>POLR1C</label>
    </interactant>
    <organismsDiffer>false</organismsDiffer>
    <experiments>3</experiments>
</comment>
<comment type="interaction">
    <interactant intactId="EBI-1216080">
        <id>Q9Y250</id>
    </interactant>
    <interactant intactId="EBI-5452779">
        <id>Q9BUI4</id>
        <label>POLR3C</label>
    </interactant>
    <organismsDiffer>false</organismsDiffer>
    <experiments>3</experiments>
</comment>
<comment type="interaction">
    <interactant intactId="EBI-1216080">
        <id>Q9Y250</id>
    </interactant>
    <interactant intactId="EBI-2557469">
        <id>Q6NYC8</id>
        <label>PPP1R18</label>
    </interactant>
    <organismsDiffer>false</organismsDiffer>
    <experiments>3</experiments>
</comment>
<comment type="interaction">
    <interactant intactId="EBI-1216080">
        <id>Q9Y250</id>
    </interactant>
    <interactant intactId="EBI-1053424">
        <id>O43741</id>
        <label>PRKAB2</label>
    </interactant>
    <organismsDiffer>false</organismsDiffer>
    <experiments>3</experiments>
</comment>
<comment type="interaction">
    <interactant intactId="EBI-1216080">
        <id>Q9Y250</id>
    </interactant>
    <interactant intactId="EBI-2798416">
        <id>Q99633</id>
        <label>PRPF18</label>
    </interactant>
    <organismsDiffer>false</organismsDiffer>
    <experiments>3</experiments>
</comment>
<comment type="interaction">
    <interactant intactId="EBI-1216080">
        <id>Q9Y250</id>
    </interactant>
    <interactant intactId="EBI-744322">
        <id>O43395</id>
        <label>PRPF3</label>
    </interactant>
    <organismsDiffer>false</organismsDiffer>
    <experiments>3</experiments>
</comment>
<comment type="interaction">
    <interactant intactId="EBI-1216080">
        <id>Q9Y250</id>
    </interactant>
    <interactant intactId="EBI-359352">
        <id>P25786</id>
        <label>PSMA1</label>
    </interactant>
    <organismsDiffer>false</organismsDiffer>
    <experiments>3</experiments>
</comment>
<comment type="interaction">
    <interactant intactId="EBI-1216080">
        <id>Q9Y250</id>
    </interactant>
    <interactant intactId="EBI-12135327">
        <id>Q8WXF1-2</id>
        <label>PSPC1</label>
    </interactant>
    <organismsDiffer>false</organismsDiffer>
    <experiments>3</experiments>
</comment>
<comment type="interaction">
    <interactant intactId="EBI-1216080">
        <id>Q9Y250</id>
    </interactant>
    <interactant intactId="EBI-347462">
        <id>P47897</id>
        <label>QARS1</label>
    </interactant>
    <organismsDiffer>false</organismsDiffer>
    <experiments>3</experiments>
</comment>
<comment type="interaction">
    <interactant intactId="EBI-1216080">
        <id>Q9Y250</id>
    </interactant>
    <interactant intactId="EBI-713992">
        <id>P47224</id>
        <label>RABIF</label>
    </interactant>
    <organismsDiffer>false</organismsDiffer>
    <experiments>3</experiments>
</comment>
<comment type="interaction">
    <interactant intactId="EBI-1216080">
        <id>Q9Y250</id>
    </interactant>
    <interactant intactId="EBI-746325">
        <id>Q8TCX5</id>
        <label>RHPN1</label>
    </interactant>
    <organismsDiffer>false</organismsDiffer>
    <experiments>3</experiments>
</comment>
<comment type="interaction">
    <interactant intactId="EBI-1216080">
        <id>Q9Y250</id>
    </interactant>
    <interactant intactId="EBI-748350">
        <id>Q9UHP6</id>
        <label>RSPH14</label>
    </interactant>
    <organismsDiffer>false</organismsDiffer>
    <experiments>3</experiments>
</comment>
<comment type="interaction">
    <interactant intactId="EBI-1216080">
        <id>Q9Y250</id>
    </interactant>
    <interactant intactId="EBI-11984663">
        <id>Q06455-2</id>
        <label>RUNX1T1</label>
    </interactant>
    <organismsDiffer>false</organismsDiffer>
    <experiments>3</experiments>
</comment>
<comment type="interaction">
    <interactant intactId="EBI-1216080">
        <id>Q9Y250</id>
    </interactant>
    <interactant intactId="EBI-748391">
        <id>Q9BWG6</id>
        <label>SCNM1</label>
    </interactant>
    <organismsDiffer>false</organismsDiffer>
    <experiments>3</experiments>
</comment>
<comment type="interaction">
    <interactant intactId="EBI-1216080">
        <id>Q9Y250</id>
    </interactant>
    <interactant intactId="EBI-743117">
        <id>Q96ES7</id>
        <label>SGF29</label>
    </interactant>
    <organismsDiffer>false</organismsDiffer>
    <experiments>3</experiments>
</comment>
<comment type="interaction">
    <interactant intactId="EBI-1216080">
        <id>Q9Y250</id>
    </interactant>
    <interactant intactId="EBI-12162209">
        <id>Q5MJ68</id>
        <label>SPDYC</label>
    </interactant>
    <organismsDiffer>false</organismsDiffer>
    <experiments>3</experiments>
</comment>
<comment type="interaction">
    <interactant intactId="EBI-1216080">
        <id>Q9Y250</id>
    </interactant>
    <interactant intactId="EBI-740595">
        <id>Q9UMX1</id>
        <label>SUFU</label>
    </interactant>
    <organismsDiffer>false</organismsDiffer>
    <experiments>3</experiments>
</comment>
<comment type="interaction">
    <interactant intactId="EBI-1216080">
        <id>Q9Y250</id>
    </interactant>
    <interactant intactId="EBI-745392">
        <id>Q9BSW7</id>
        <label>SYT17</label>
    </interactant>
    <organismsDiffer>false</organismsDiffer>
    <experiments>3</experiments>
</comment>
<comment type="interaction">
    <interactant intactId="EBI-1216080">
        <id>Q9Y250</id>
    </interactant>
    <interactant intactId="EBI-10246152">
        <id>Q5T7P8-2</id>
        <label>SYT6</label>
    </interactant>
    <organismsDiffer>false</organismsDiffer>
    <experiments>3</experiments>
</comment>
<comment type="interaction">
    <interactant intactId="EBI-1216080">
        <id>Q9Y250</id>
    </interactant>
    <interactant intactId="EBI-747142">
        <id>Q96C24</id>
        <label>SYTL4</label>
    </interactant>
    <organismsDiffer>false</organismsDiffer>
    <experiments>3</experiments>
</comment>
<comment type="interaction">
    <interactant intactId="EBI-1216080">
        <id>Q9Y250</id>
    </interactant>
    <interactant intactId="EBI-1644036">
        <id>Q86TI0</id>
        <label>TBC1D1</label>
    </interactant>
    <organismsDiffer>false</organismsDiffer>
    <experiments>3</experiments>
</comment>
<comment type="interaction">
    <interactant intactId="EBI-1216080">
        <id>Q9Y250</id>
    </interactant>
    <interactant intactId="EBI-3258000">
        <id>Q9P0N9</id>
        <label>TBC1D7</label>
    </interactant>
    <organismsDiffer>false</organismsDiffer>
    <experiments>3</experiments>
</comment>
<comment type="interaction">
    <interactant intactId="EBI-1216080">
        <id>Q9Y250</id>
    </interactant>
    <interactant intactId="EBI-710310">
        <id>Q15560</id>
        <label>TCEA2</label>
    </interactant>
    <organismsDiffer>false</organismsDiffer>
    <experiments>3</experiments>
</comment>
<comment type="interaction">
    <interactant intactId="EBI-1216080">
        <id>Q9Y250</id>
    </interactant>
    <interactant intactId="EBI-744794">
        <id>Q9BZW7</id>
        <label>TSGA10</label>
    </interactant>
    <organismsDiffer>false</organismsDiffer>
    <experiments>3</experiments>
</comment>
<comment type="interaction">
    <interactant intactId="EBI-1216080">
        <id>Q9Y250</id>
    </interactant>
    <interactant intactId="EBI-10241197">
        <id>Q3SY00</id>
        <label>TSGA10IP</label>
    </interactant>
    <organismsDiffer>false</organismsDiffer>
    <experiments>3</experiments>
</comment>
<comment type="interaction">
    <interactant intactId="EBI-1216080">
        <id>Q9Y250</id>
    </interactant>
    <interactant intactId="EBI-2851213">
        <id>Q8N5M4</id>
        <label>TTC9C</label>
    </interactant>
    <organismsDiffer>false</organismsDiffer>
    <experiments>3</experiments>
</comment>
<comment type="interaction">
    <interactant intactId="EBI-1216080">
        <id>Q9Y250</id>
    </interactant>
    <interactant intactId="EBI-359793">
        <id>P40222</id>
        <label>TXLNA</label>
    </interactant>
    <organismsDiffer>false</organismsDiffer>
    <experiments>3</experiments>
</comment>
<comment type="interaction">
    <interactant intactId="EBI-1216080">
        <id>Q9Y250</id>
    </interactant>
    <interactant intactId="EBI-6116822">
        <id>Q8N3L3</id>
        <label>TXLNB</label>
    </interactant>
    <organismsDiffer>false</organismsDiffer>
    <experiments>3</experiments>
</comment>
<comment type="interaction">
    <interactant intactId="EBI-1216080">
        <id>Q9Y250</id>
    </interactant>
    <interactant intactId="EBI-707554">
        <id>O14530</id>
        <label>TXNDC9</label>
    </interactant>
    <organismsDiffer>false</organismsDiffer>
    <experiments>3</experiments>
</comment>
<comment type="interaction">
    <interactant intactId="EBI-1216080">
        <id>Q9Y250</id>
    </interactant>
    <interactant intactId="EBI-7353612">
        <id>P57075-2</id>
        <label>UBASH3A</label>
    </interactant>
    <organismsDiffer>false</organismsDiffer>
    <experiments>3</experiments>
</comment>
<comment type="interaction">
    <interactant intactId="EBI-1216080">
        <id>Q9Y250</id>
    </interactant>
    <interactant intactId="EBI-10183064">
        <id>Q8N5A5-2</id>
        <label>ZGPAT</label>
    </interactant>
    <organismsDiffer>false</organismsDiffer>
    <experiments>3</experiments>
</comment>
<comment type="interaction">
    <interactant intactId="EBI-1216080">
        <id>Q9Y250</id>
    </interactant>
    <interactant intactId="EBI-746595">
        <id>Q96E35</id>
        <label>ZMYND19</label>
    </interactant>
    <organismsDiffer>false</organismsDiffer>
    <experiments>3</experiments>
</comment>
<comment type="interaction">
    <interactant intactId="EBI-1216080">
        <id>Q9Y250</id>
    </interactant>
    <interactant intactId="EBI-10177272">
        <id>P15622-3</id>
        <label>ZNF250</label>
    </interactant>
    <organismsDiffer>false</organismsDiffer>
    <experiments>3</experiments>
</comment>
<comment type="interaction">
    <interactant intactId="EBI-1216080">
        <id>Q9Y250</id>
    </interactant>
    <interactant intactId="EBI-1640965">
        <id>P17036</id>
        <label>ZNF3</label>
    </interactant>
    <organismsDiffer>false</organismsDiffer>
    <experiments>3</experiments>
</comment>
<comment type="interaction">
    <interactant intactId="EBI-1216080">
        <id>Q9Y250</id>
    </interactant>
    <interactant intactId="EBI-11041653">
        <id>P13682</id>
        <label>ZNF35</label>
    </interactant>
    <organismsDiffer>false</organismsDiffer>
    <experiments>3</experiments>
</comment>
<comment type="interaction">
    <interactant intactId="EBI-1216080">
        <id>Q9Y250</id>
    </interactant>
    <interactant intactId="EBI-740727">
        <id>Q8TAU3</id>
        <label>ZNF417</label>
    </interactant>
    <organismsDiffer>false</organismsDiffer>
    <experiments>3</experiments>
</comment>
<comment type="interaction">
    <interactant intactId="EBI-1216080">
        <id>Q9Y250</id>
    </interactant>
    <interactant intactId="EBI-10172590">
        <id>Q7Z3I7</id>
        <label>ZNF572</label>
    </interactant>
    <organismsDiffer>false</organismsDiffer>
    <experiments>3</experiments>
</comment>
<comment type="interaction">
    <interactant intactId="EBI-1216080">
        <id>Q9Y250</id>
    </interactant>
    <interactant intactId="EBI-6427977">
        <id>Q96SQ5</id>
        <label>ZNF587</label>
    </interactant>
    <organismsDiffer>false</organismsDiffer>
    <experiments>3</experiments>
</comment>
<comment type="subcellular location">
    <subcellularLocation>
        <location evidence="1">Cytoplasm</location>
    </subcellularLocation>
    <subcellularLocation>
        <location evidence="1">Cell membrane</location>
    </subcellularLocation>
    <subcellularLocation>
        <location evidence="1">Cell projection</location>
        <location evidence="1">Dendritic spine</location>
    </subcellularLocation>
    <subcellularLocation>
        <location evidence="1">Postsynaptic density</location>
    </subcellularLocation>
    <subcellularLocation>
        <location evidence="1">Synapse</location>
    </subcellularLocation>
    <text evidence="1">Associated with the plasma membrane and with microtubules. Detected in dendritic spines, especially in the postsynaptic density (By similarity).</text>
</comment>
<comment type="alternative products">
    <event type="alternative splicing"/>
    <isoform>
        <id>Q9Y250-1</id>
        <name>1</name>
        <sequence type="displayed"/>
    </isoform>
    <isoform>
        <id>Q9Y250-2</id>
        <name>2</name>
        <sequence type="described" ref="VSP_009946"/>
    </isoform>
    <isoform>
        <id>Q9Y250-3</id>
        <name>3</name>
        <sequence type="described" ref="VSP_009945"/>
    </isoform>
    <isoform>
        <id>Q9Y250-4</id>
        <name>4</name>
        <sequence type="described" ref="VSP_009944"/>
    </isoform>
    <isoform>
        <id>Q9Y250-5</id>
        <name>5</name>
        <sequence type="described" ref="VSP_009943"/>
    </isoform>
    <isoform>
        <id>Q9Y250-6</id>
        <name>6</name>
        <sequence type="described" ref="VSP_009942"/>
    </isoform>
    <isoform>
        <id>Q9Y250-7</id>
        <name>7</name>
        <sequence type="described" ref="VSP_009940 VSP_009941"/>
    </isoform>
</comment>
<comment type="tissue specificity">
    <text evidence="4">Highly expressed in testis, prostate, spleen, thymus, ovary and brain. Detected at lower levels in heart, placenta, small intestine, colon, liver, kidney, skeletal muscle and pancreas. Not detectable in primary tumors from breast and prostate and in many cancer cell lines.</text>
</comment>
<comment type="PTM">
    <text>Phosphorylated on serine residues. Hyperphosphorylated by the cAMP-dependent kinase PKA during cell-cycle progression.</text>
</comment>
<comment type="disease" evidence="4">
    <disease id="DI-01537">
        <name>Esophageal cancer</name>
        <acronym>ESCR</acronym>
        <description>A malignancy of the esophagus. The most common types are esophageal squamous cell carcinoma and adenocarcinoma. Cancer of the esophagus remains a devastating disease because it is usually not detected until it has progressed to an advanced incurable stage.</description>
        <dbReference type="MIM" id="133239"/>
    </disease>
    <text>The disease may be caused by variants affecting the gene represented in this entry.</text>
</comment>
<comment type="miscellaneous">
    <text>Defects in LZTS1 are found in many types of tumors.</text>
</comment>
<comment type="similarity">
    <text evidence="8">Belongs to the LZTS family.</text>
</comment>
<comment type="online information" name="Atlas of Genetics and Cytogenetics in Oncology and Haematology">
    <link uri="https://atlasgeneticsoncology.org/gene/367/LZTS1"/>
</comment>